<protein>
    <recommendedName>
        <fullName evidence="1">Acyl carrier protein</fullName>
        <shortName evidence="1">ACP</shortName>
    </recommendedName>
</protein>
<comment type="function">
    <text evidence="1">Carrier of the growing fatty acid chain in fatty acid biosynthesis.</text>
</comment>
<comment type="pathway">
    <text evidence="1">Lipid metabolism; fatty acid biosynthesis.</text>
</comment>
<comment type="subcellular location">
    <subcellularLocation>
        <location evidence="1">Cytoplasm</location>
    </subcellularLocation>
</comment>
<comment type="PTM">
    <text evidence="1">4'-phosphopantetheine is transferred from CoA to a specific serine of apo-ACP by AcpS. This modification is essential for activity because fatty acids are bound in thioester linkage to the sulfhydryl of the prosthetic group.</text>
</comment>
<comment type="similarity">
    <text evidence="1">Belongs to the acyl carrier protein (ACP) family.</text>
</comment>
<sequence>MDNDEIFSKVRSIISEQLDKKEDEITIDSRFVEDLNADSLDIYELLYLLEEAFDDKIPENEANEFETVGDVVNFIKKRKG</sequence>
<proteinExistence type="inferred from homology"/>
<keyword id="KW-0963">Cytoplasm</keyword>
<keyword id="KW-0275">Fatty acid biosynthesis</keyword>
<keyword id="KW-0276">Fatty acid metabolism</keyword>
<keyword id="KW-0444">Lipid biosynthesis</keyword>
<keyword id="KW-0443">Lipid metabolism</keyword>
<keyword id="KW-0596">Phosphopantetheine</keyword>
<keyword id="KW-0597">Phosphoprotein</keyword>
<reference key="1">
    <citation type="journal article" date="2004" name="Nucleic Acids Res.">
        <title>Comparative analysis of the Borrelia garinii genome.</title>
        <authorList>
            <person name="Gloeckner G."/>
            <person name="Lehmann R."/>
            <person name="Romualdi A."/>
            <person name="Pradella S."/>
            <person name="Schulte-Spechtel U."/>
            <person name="Schilhabel M."/>
            <person name="Wilske B."/>
            <person name="Suehnel J."/>
            <person name="Platzer M."/>
        </authorList>
    </citation>
    <scope>NUCLEOTIDE SEQUENCE [LARGE SCALE GENOMIC DNA]</scope>
    <source>
        <strain>ATCC BAA-2496 / DSM 23469 / PBi</strain>
    </source>
</reference>
<evidence type="ECO:0000255" key="1">
    <source>
        <dbReference type="HAMAP-Rule" id="MF_01217"/>
    </source>
</evidence>
<evidence type="ECO:0000255" key="2">
    <source>
        <dbReference type="PROSITE-ProRule" id="PRU00258"/>
    </source>
</evidence>
<accession>Q660G8</accession>
<name>ACP_BORGP</name>
<feature type="chain" id="PRO_0000180111" description="Acyl carrier protein">
    <location>
        <begin position="1"/>
        <end position="80"/>
    </location>
</feature>
<feature type="domain" description="Carrier" evidence="2">
    <location>
        <begin position="4"/>
        <end position="79"/>
    </location>
</feature>
<feature type="modified residue" description="O-(pantetheine 4'-phosphoryl)serine" evidence="2">
    <location>
        <position position="39"/>
    </location>
</feature>
<gene>
    <name evidence="1" type="primary">acpP</name>
    <name type="ordered locus">BG0726</name>
</gene>
<dbReference type="EMBL" id="CP000013">
    <property type="protein sequence ID" value="AAU07553.1"/>
    <property type="molecule type" value="Genomic_DNA"/>
</dbReference>
<dbReference type="RefSeq" id="WP_004789379.1">
    <property type="nucleotide sequence ID" value="NZ_CP028872.1"/>
</dbReference>
<dbReference type="BMRB" id="Q660G8"/>
<dbReference type="SMR" id="Q660G8"/>
<dbReference type="GeneID" id="83866183"/>
<dbReference type="KEGG" id="bga:BG0726"/>
<dbReference type="eggNOG" id="COG0236">
    <property type="taxonomic scope" value="Bacteria"/>
</dbReference>
<dbReference type="HOGENOM" id="CLU_108696_5_6_12"/>
<dbReference type="OrthoDB" id="9804551at2"/>
<dbReference type="UniPathway" id="UPA00094"/>
<dbReference type="Proteomes" id="UP000002276">
    <property type="component" value="Chromosome"/>
</dbReference>
<dbReference type="GO" id="GO:0005829">
    <property type="term" value="C:cytosol"/>
    <property type="evidence" value="ECO:0007669"/>
    <property type="project" value="TreeGrafter"/>
</dbReference>
<dbReference type="GO" id="GO:0016020">
    <property type="term" value="C:membrane"/>
    <property type="evidence" value="ECO:0007669"/>
    <property type="project" value="GOC"/>
</dbReference>
<dbReference type="GO" id="GO:0000035">
    <property type="term" value="F:acyl binding"/>
    <property type="evidence" value="ECO:0007669"/>
    <property type="project" value="TreeGrafter"/>
</dbReference>
<dbReference type="GO" id="GO:0000036">
    <property type="term" value="F:acyl carrier activity"/>
    <property type="evidence" value="ECO:0007669"/>
    <property type="project" value="UniProtKB-UniRule"/>
</dbReference>
<dbReference type="GO" id="GO:0009245">
    <property type="term" value="P:lipid A biosynthetic process"/>
    <property type="evidence" value="ECO:0007669"/>
    <property type="project" value="TreeGrafter"/>
</dbReference>
<dbReference type="Gene3D" id="1.10.1200.10">
    <property type="entry name" value="ACP-like"/>
    <property type="match status" value="1"/>
</dbReference>
<dbReference type="HAMAP" id="MF_01217">
    <property type="entry name" value="Acyl_carrier"/>
    <property type="match status" value="1"/>
</dbReference>
<dbReference type="InterPro" id="IPR003231">
    <property type="entry name" value="ACP"/>
</dbReference>
<dbReference type="InterPro" id="IPR036736">
    <property type="entry name" value="ACP-like_sf"/>
</dbReference>
<dbReference type="InterPro" id="IPR009081">
    <property type="entry name" value="PP-bd_ACP"/>
</dbReference>
<dbReference type="NCBIfam" id="TIGR00517">
    <property type="entry name" value="acyl_carrier"/>
    <property type="match status" value="1"/>
</dbReference>
<dbReference type="NCBIfam" id="NF002148">
    <property type="entry name" value="PRK00982.1-2"/>
    <property type="match status" value="1"/>
</dbReference>
<dbReference type="NCBIfam" id="NF002150">
    <property type="entry name" value="PRK00982.1-4"/>
    <property type="match status" value="1"/>
</dbReference>
<dbReference type="PANTHER" id="PTHR20863">
    <property type="entry name" value="ACYL CARRIER PROTEIN"/>
    <property type="match status" value="1"/>
</dbReference>
<dbReference type="PANTHER" id="PTHR20863:SF76">
    <property type="entry name" value="CARRIER DOMAIN-CONTAINING PROTEIN"/>
    <property type="match status" value="1"/>
</dbReference>
<dbReference type="Pfam" id="PF00550">
    <property type="entry name" value="PP-binding"/>
    <property type="match status" value="1"/>
</dbReference>
<dbReference type="SUPFAM" id="SSF47336">
    <property type="entry name" value="ACP-like"/>
    <property type="match status" value="1"/>
</dbReference>
<dbReference type="PROSITE" id="PS50075">
    <property type="entry name" value="CARRIER"/>
    <property type="match status" value="1"/>
</dbReference>
<organism>
    <name type="scientific">Borrelia garinii subsp. bavariensis (strain ATCC BAA-2496 / DSM 23469 / PBi)</name>
    <name type="common">Borreliella bavariensis</name>
    <dbReference type="NCBI Taxonomy" id="290434"/>
    <lineage>
        <taxon>Bacteria</taxon>
        <taxon>Pseudomonadati</taxon>
        <taxon>Spirochaetota</taxon>
        <taxon>Spirochaetia</taxon>
        <taxon>Spirochaetales</taxon>
        <taxon>Borreliaceae</taxon>
        <taxon>Borreliella</taxon>
    </lineage>
</organism>